<comment type="function">
    <text evidence="1">This is one of the proteins that bind and probably mediate the attachment of the 5S RNA into the large ribosomal subunit, where it forms part of the central protuberance. In the 70S ribosome it contacts protein S13 of the 30S subunit (bridge B1b), connecting the 2 subunits; this bridge is implicated in subunit movement. Contacts the P site tRNA; the 5S rRNA and some of its associated proteins might help stabilize positioning of ribosome-bound tRNAs.</text>
</comment>
<comment type="subunit">
    <text evidence="1">Part of the 50S ribosomal subunit; part of the 5S rRNA/L5/L18/L25 subcomplex. Contacts the 5S rRNA and the P site tRNA. Forms a bridge to the 30S subunit in the 70S ribosome.</text>
</comment>
<comment type="similarity">
    <text evidence="1">Belongs to the universal ribosomal protein uL5 family.</text>
</comment>
<gene>
    <name evidence="1" type="primary">rplE</name>
    <name type="ordered locus">BLD_1719</name>
</gene>
<evidence type="ECO:0000255" key="1">
    <source>
        <dbReference type="HAMAP-Rule" id="MF_01333"/>
    </source>
</evidence>
<evidence type="ECO:0000305" key="2"/>
<reference key="1">
    <citation type="journal article" date="2008" name="BMC Genomics">
        <title>Comparative genomic analysis of the gut bacterium Bifidobacterium longum reveals loci susceptible to deletion during pure culture growth.</title>
        <authorList>
            <person name="Lee J.H."/>
            <person name="Karamychev V.N."/>
            <person name="Kozyavkin S.A."/>
            <person name="Mills D."/>
            <person name="Pavlov A.R."/>
            <person name="Pavlova N.V."/>
            <person name="Polouchine N.N."/>
            <person name="Richardson P.M."/>
            <person name="Shakhova V.V."/>
            <person name="Slesarev A.I."/>
            <person name="Weimer B."/>
            <person name="O'Sullivan D.J."/>
        </authorList>
    </citation>
    <scope>NUCLEOTIDE SEQUENCE [LARGE SCALE GENOMIC DNA]</scope>
    <source>
        <strain>DJO10A</strain>
    </source>
</reference>
<name>RL5_BIFLD</name>
<proteinExistence type="inferred from homology"/>
<sequence>MTDTTVEAPATPRLKVKYNEQIIPELEKEFKYSNPMQVARVQKVVVSMGVGAAARDSKLIEGAVKDLTLITGQKPKITKAKKSVAQFHLREGQAIGAYVTLRGDRMWEFLDRLLTLALPRIRDFRGINGHQFDGQGNYNFGLTEQSMFHEIDPDSIDHVRGMDITVVTSTKDDKEAYALLKHLGFPFKEN</sequence>
<organism>
    <name type="scientific">Bifidobacterium longum (strain DJO10A)</name>
    <dbReference type="NCBI Taxonomy" id="205913"/>
    <lineage>
        <taxon>Bacteria</taxon>
        <taxon>Bacillati</taxon>
        <taxon>Actinomycetota</taxon>
        <taxon>Actinomycetes</taxon>
        <taxon>Bifidobacteriales</taxon>
        <taxon>Bifidobacteriaceae</taxon>
        <taxon>Bifidobacterium</taxon>
    </lineage>
</organism>
<dbReference type="EMBL" id="CP000605">
    <property type="protein sequence ID" value="ACD99164.1"/>
    <property type="molecule type" value="Genomic_DNA"/>
</dbReference>
<dbReference type="RefSeq" id="WP_007053039.1">
    <property type="nucleotide sequence ID" value="NZ_AABM02000025.1"/>
</dbReference>
<dbReference type="SMR" id="B3DQC6"/>
<dbReference type="GeneID" id="69578885"/>
<dbReference type="KEGG" id="blj:BLD_1719"/>
<dbReference type="HOGENOM" id="CLU_061015_2_1_11"/>
<dbReference type="Proteomes" id="UP000002419">
    <property type="component" value="Chromosome"/>
</dbReference>
<dbReference type="GO" id="GO:1990904">
    <property type="term" value="C:ribonucleoprotein complex"/>
    <property type="evidence" value="ECO:0007669"/>
    <property type="project" value="UniProtKB-KW"/>
</dbReference>
<dbReference type="GO" id="GO:0005840">
    <property type="term" value="C:ribosome"/>
    <property type="evidence" value="ECO:0007669"/>
    <property type="project" value="UniProtKB-KW"/>
</dbReference>
<dbReference type="GO" id="GO:0019843">
    <property type="term" value="F:rRNA binding"/>
    <property type="evidence" value="ECO:0007669"/>
    <property type="project" value="UniProtKB-UniRule"/>
</dbReference>
<dbReference type="GO" id="GO:0003735">
    <property type="term" value="F:structural constituent of ribosome"/>
    <property type="evidence" value="ECO:0007669"/>
    <property type="project" value="InterPro"/>
</dbReference>
<dbReference type="GO" id="GO:0000049">
    <property type="term" value="F:tRNA binding"/>
    <property type="evidence" value="ECO:0007669"/>
    <property type="project" value="UniProtKB-UniRule"/>
</dbReference>
<dbReference type="GO" id="GO:0006412">
    <property type="term" value="P:translation"/>
    <property type="evidence" value="ECO:0007669"/>
    <property type="project" value="UniProtKB-UniRule"/>
</dbReference>
<dbReference type="FunFam" id="3.30.1440.10:FF:000001">
    <property type="entry name" value="50S ribosomal protein L5"/>
    <property type="match status" value="1"/>
</dbReference>
<dbReference type="Gene3D" id="3.30.1440.10">
    <property type="match status" value="1"/>
</dbReference>
<dbReference type="HAMAP" id="MF_01333_B">
    <property type="entry name" value="Ribosomal_uL5_B"/>
    <property type="match status" value="1"/>
</dbReference>
<dbReference type="InterPro" id="IPR002132">
    <property type="entry name" value="Ribosomal_uL5"/>
</dbReference>
<dbReference type="InterPro" id="IPR020930">
    <property type="entry name" value="Ribosomal_uL5_bac-type"/>
</dbReference>
<dbReference type="InterPro" id="IPR031309">
    <property type="entry name" value="Ribosomal_uL5_C"/>
</dbReference>
<dbReference type="InterPro" id="IPR022803">
    <property type="entry name" value="Ribosomal_uL5_dom_sf"/>
</dbReference>
<dbReference type="InterPro" id="IPR031310">
    <property type="entry name" value="Ribosomal_uL5_N"/>
</dbReference>
<dbReference type="NCBIfam" id="NF000585">
    <property type="entry name" value="PRK00010.1"/>
    <property type="match status" value="1"/>
</dbReference>
<dbReference type="PANTHER" id="PTHR11994">
    <property type="entry name" value="60S RIBOSOMAL PROTEIN L11-RELATED"/>
    <property type="match status" value="1"/>
</dbReference>
<dbReference type="Pfam" id="PF00281">
    <property type="entry name" value="Ribosomal_L5"/>
    <property type="match status" value="1"/>
</dbReference>
<dbReference type="Pfam" id="PF00673">
    <property type="entry name" value="Ribosomal_L5_C"/>
    <property type="match status" value="1"/>
</dbReference>
<dbReference type="PIRSF" id="PIRSF002161">
    <property type="entry name" value="Ribosomal_L5"/>
    <property type="match status" value="1"/>
</dbReference>
<dbReference type="SUPFAM" id="SSF55282">
    <property type="entry name" value="RL5-like"/>
    <property type="match status" value="1"/>
</dbReference>
<accession>B3DQC6</accession>
<feature type="chain" id="PRO_1000142356" description="Large ribosomal subunit protein uL5">
    <location>
        <begin position="1"/>
        <end position="190"/>
    </location>
</feature>
<protein>
    <recommendedName>
        <fullName evidence="1">Large ribosomal subunit protein uL5</fullName>
    </recommendedName>
    <alternativeName>
        <fullName evidence="2">50S ribosomal protein L5</fullName>
    </alternativeName>
</protein>
<keyword id="KW-0687">Ribonucleoprotein</keyword>
<keyword id="KW-0689">Ribosomal protein</keyword>
<keyword id="KW-0694">RNA-binding</keyword>
<keyword id="KW-0699">rRNA-binding</keyword>
<keyword id="KW-0820">tRNA-binding</keyword>